<protein>
    <recommendedName>
        <fullName evidence="1">Nuclear cap-binding protein subunit 3</fullName>
    </recommendedName>
</protein>
<comment type="function">
    <text evidence="1">Associates with NCBP1/CBP80 to form an alternative cap-binding complex (CBC) which plays a key role in mRNA export. NCBP3 serves as adapter protein linking the capped RNAs (m7GpppG-capped RNA) to NCBP1/CBP80. Unlike the conventional CBC with NCBP2 which binds both small nuclear RNA (snRNA) and messenger (mRNA) and is involved in their export from the nucleus, the alternative CBC with NCBP3 does not bind snRNA and associates only with mRNA thereby playing a role in only mRNA export.</text>
</comment>
<comment type="subunit">
    <text evidence="1">Component of an alternative cap-binding complex (CBC) composed of NCBP1/CBP80 and NCBP3.</text>
</comment>
<comment type="subcellular location">
    <subcellularLocation>
        <location evidence="1">Nucleus</location>
    </subcellularLocation>
    <subcellularLocation>
        <location evidence="1">Cytoplasm</location>
    </subcellularLocation>
</comment>
<comment type="similarity">
    <text evidence="3">Belongs to the NCBP3 family.</text>
</comment>
<proteinExistence type="evidence at transcript level"/>
<keyword id="KW-0963">Cytoplasm</keyword>
<keyword id="KW-0506">mRNA capping</keyword>
<keyword id="KW-0507">mRNA processing</keyword>
<keyword id="KW-0509">mRNA transport</keyword>
<keyword id="KW-0539">Nucleus</keyword>
<keyword id="KW-1185">Reference proteome</keyword>
<keyword id="KW-0694">RNA-binding</keyword>
<keyword id="KW-0813">Transport</keyword>
<dbReference type="EMBL" id="BC077240">
    <property type="protein sequence ID" value="AAH77240.1"/>
    <property type="molecule type" value="mRNA"/>
</dbReference>
<dbReference type="RefSeq" id="NP_001086653.1">
    <property type="nucleotide sequence ID" value="NM_001093184.1"/>
</dbReference>
<dbReference type="SMR" id="Q6DE94"/>
<dbReference type="DNASU" id="446488"/>
<dbReference type="GeneID" id="446488"/>
<dbReference type="KEGG" id="xla:446488"/>
<dbReference type="AGR" id="Xenbase:XB-GENE-5831162"/>
<dbReference type="CTD" id="446488"/>
<dbReference type="Xenbase" id="XB-GENE-5831162">
    <property type="gene designation" value="ncbp3.L"/>
</dbReference>
<dbReference type="OrthoDB" id="422106at2759"/>
<dbReference type="Proteomes" id="UP000186698">
    <property type="component" value="Chromosome 2L"/>
</dbReference>
<dbReference type="Bgee" id="446488">
    <property type="expression patterns" value="Expressed in blastula and 19 other cell types or tissues"/>
</dbReference>
<dbReference type="GO" id="GO:0005737">
    <property type="term" value="C:cytoplasm"/>
    <property type="evidence" value="ECO:0000250"/>
    <property type="project" value="UniProtKB"/>
</dbReference>
<dbReference type="GO" id="GO:0005634">
    <property type="term" value="C:nucleus"/>
    <property type="evidence" value="ECO:0000250"/>
    <property type="project" value="UniProtKB"/>
</dbReference>
<dbReference type="GO" id="GO:0003729">
    <property type="term" value="F:mRNA binding"/>
    <property type="evidence" value="ECO:0000250"/>
    <property type="project" value="UniProtKB"/>
</dbReference>
<dbReference type="GO" id="GO:0000340">
    <property type="term" value="F:RNA 7-methylguanosine cap binding"/>
    <property type="evidence" value="ECO:0000250"/>
    <property type="project" value="UniProtKB"/>
</dbReference>
<dbReference type="GO" id="GO:0000339">
    <property type="term" value="F:RNA cap binding"/>
    <property type="evidence" value="ECO:0000318"/>
    <property type="project" value="GO_Central"/>
</dbReference>
<dbReference type="GO" id="GO:0006370">
    <property type="term" value="P:7-methylguanosine mRNA capping"/>
    <property type="evidence" value="ECO:0007669"/>
    <property type="project" value="UniProtKB-KW"/>
</dbReference>
<dbReference type="GO" id="GO:0051028">
    <property type="term" value="P:mRNA transport"/>
    <property type="evidence" value="ECO:0007669"/>
    <property type="project" value="UniProtKB-KW"/>
</dbReference>
<dbReference type="InterPro" id="IPR019416">
    <property type="entry name" value="NCBP3"/>
</dbReference>
<dbReference type="PANTHER" id="PTHR16291">
    <property type="entry name" value="NUCLEAR CAP-BINDING PROTEIN SUBUNIT 3"/>
    <property type="match status" value="1"/>
</dbReference>
<dbReference type="PANTHER" id="PTHR16291:SF0">
    <property type="entry name" value="NUCLEAR CAP-BINDING PROTEIN SUBUNIT 3"/>
    <property type="match status" value="1"/>
</dbReference>
<dbReference type="Pfam" id="PF10309">
    <property type="entry name" value="NCBP3"/>
    <property type="match status" value="1"/>
</dbReference>
<feature type="chain" id="PRO_0000308586" description="Nuclear cap-binding protein subunit 3">
    <location>
        <begin position="1"/>
        <end position="618"/>
    </location>
</feature>
<feature type="region of interest" description="Disordered" evidence="2">
    <location>
        <begin position="1"/>
        <end position="53"/>
    </location>
</feature>
<feature type="region of interest" description="RNA recognition motif (RRM) domain" evidence="1">
    <location>
        <begin position="117"/>
        <end position="178"/>
    </location>
</feature>
<feature type="region of interest" description="Disordered" evidence="2">
    <location>
        <begin position="170"/>
        <end position="250"/>
    </location>
</feature>
<feature type="region of interest" description="Disordered" evidence="2">
    <location>
        <begin position="342"/>
        <end position="366"/>
    </location>
</feature>
<feature type="region of interest" description="Disordered" evidence="2">
    <location>
        <begin position="426"/>
        <end position="618"/>
    </location>
</feature>
<feature type="short sequence motif" description="WLDD motif; essential for 7-methylguanosine-containing mRNA cap binding" evidence="1">
    <location>
        <begin position="146"/>
        <end position="149"/>
    </location>
</feature>
<feature type="compositionally biased region" description="Acidic residues" evidence="2">
    <location>
        <begin position="20"/>
        <end position="29"/>
    </location>
</feature>
<feature type="compositionally biased region" description="Basic and acidic residues" evidence="2">
    <location>
        <begin position="174"/>
        <end position="188"/>
    </location>
</feature>
<feature type="compositionally biased region" description="Acidic residues" evidence="2">
    <location>
        <begin position="205"/>
        <end position="223"/>
    </location>
</feature>
<feature type="compositionally biased region" description="Polar residues" evidence="2">
    <location>
        <begin position="231"/>
        <end position="240"/>
    </location>
</feature>
<feature type="compositionally biased region" description="Acidic residues" evidence="2">
    <location>
        <begin position="344"/>
        <end position="365"/>
    </location>
</feature>
<feature type="compositionally biased region" description="Polar residues" evidence="2">
    <location>
        <begin position="436"/>
        <end position="450"/>
    </location>
</feature>
<feature type="compositionally biased region" description="Basic and acidic residues" evidence="2">
    <location>
        <begin position="451"/>
        <end position="468"/>
    </location>
</feature>
<feature type="compositionally biased region" description="Low complexity" evidence="2">
    <location>
        <begin position="469"/>
        <end position="481"/>
    </location>
</feature>
<feature type="compositionally biased region" description="Basic and acidic residues" evidence="2">
    <location>
        <begin position="507"/>
        <end position="517"/>
    </location>
</feature>
<feature type="compositionally biased region" description="Basic and acidic residues" evidence="2">
    <location>
        <begin position="550"/>
        <end position="562"/>
    </location>
</feature>
<feature type="compositionally biased region" description="Basic and acidic residues" evidence="2">
    <location>
        <begin position="583"/>
        <end position="596"/>
    </location>
</feature>
<feature type="compositionally biased region" description="Low complexity" evidence="2">
    <location>
        <begin position="609"/>
        <end position="618"/>
    </location>
</feature>
<sequence>MAAVRGLRVSVKAGGGAEPEPMEVEEGEVEAAAGRTSPVEATADQTSPREVVPGSDRRYENRAGTFITGIDVTSKEAIEKKEQRAKRFHFRAEVSDDQRNVVLDREMMRKVPKVRLETLYICGVDEMSTQDIFAFFKQYPPGYIEWLDDSSCNVVWLDEVTASRALLNLSSKPTNEKGQRKKDGEHRSARSKKDRLDDSPQSSGDETEEGEVEEDNPNDAEVETENKSENPPETLSQAEQASILKNDLRPSIKTVKGNRLYMRFATKDDKKEHGAASKSQYYMKYGNPNYGGMKGILSNSWKKRYHSRRIQRDVIKKRTFIGDDVGLTPTYKHHHSGLVNVPEEPIEEEEEEEEEEEEDMDEDDRVVEYRDELQAFKREREGARRCAASNSDSDEMDYDLELKMISTPSPKKSMKMTMYADEVESQLKTIRHSMRSDSAGNSVKSRIGSKSHSEKPADVRLILEEKRQSTASRQQSSSSGKSDVRQRLGKRAHSPEIRKTLSIAPTSRREPLSDVHSRLGLPKQPEGKGLYSDSKEKKTGSLWNRLGTAPKEKDRASEKSGEKSQAAPEEEDSALQQAWGALIKEKEQIRQKKSRLDNLPSLQIEISRESSSGSDTDS</sequence>
<organism>
    <name type="scientific">Xenopus laevis</name>
    <name type="common">African clawed frog</name>
    <dbReference type="NCBI Taxonomy" id="8355"/>
    <lineage>
        <taxon>Eukaryota</taxon>
        <taxon>Metazoa</taxon>
        <taxon>Chordata</taxon>
        <taxon>Craniata</taxon>
        <taxon>Vertebrata</taxon>
        <taxon>Euteleostomi</taxon>
        <taxon>Amphibia</taxon>
        <taxon>Batrachia</taxon>
        <taxon>Anura</taxon>
        <taxon>Pipoidea</taxon>
        <taxon>Pipidae</taxon>
        <taxon>Xenopodinae</taxon>
        <taxon>Xenopus</taxon>
        <taxon>Xenopus</taxon>
    </lineage>
</organism>
<reference key="1">
    <citation type="submission" date="2004-07" db="EMBL/GenBank/DDBJ databases">
        <authorList>
            <consortium name="NIH - Xenopus Gene Collection (XGC) project"/>
        </authorList>
    </citation>
    <scope>NUCLEOTIDE SEQUENCE [LARGE SCALE MRNA]</scope>
    <source>
        <tissue>Ovary</tissue>
    </source>
</reference>
<evidence type="ECO:0000250" key="1">
    <source>
        <dbReference type="UniProtKB" id="Q53F19"/>
    </source>
</evidence>
<evidence type="ECO:0000256" key="2">
    <source>
        <dbReference type="SAM" id="MobiDB-lite"/>
    </source>
</evidence>
<evidence type="ECO:0000305" key="3"/>
<name>NCBP3_XENLA</name>
<accession>Q6DE94</accession>
<gene>
    <name evidence="1" type="primary">ncbp3</name>
</gene>